<dbReference type="EC" id="2.8.4.3"/>
<dbReference type="EMBL" id="CP000263">
    <property type="protein sequence ID" value="ABJ90734.1"/>
    <property type="molecule type" value="Genomic_DNA"/>
</dbReference>
<dbReference type="SMR" id="Q057G5"/>
<dbReference type="STRING" id="372461.BCc_272"/>
<dbReference type="KEGG" id="bcc:BCc_272"/>
<dbReference type="eggNOG" id="COG0621">
    <property type="taxonomic scope" value="Bacteria"/>
</dbReference>
<dbReference type="HOGENOM" id="CLU_018697_2_0_6"/>
<dbReference type="OrthoDB" id="9805215at2"/>
<dbReference type="Proteomes" id="UP000000669">
    <property type="component" value="Chromosome"/>
</dbReference>
<dbReference type="GO" id="GO:0005829">
    <property type="term" value="C:cytosol"/>
    <property type="evidence" value="ECO:0007669"/>
    <property type="project" value="TreeGrafter"/>
</dbReference>
<dbReference type="GO" id="GO:0051539">
    <property type="term" value="F:4 iron, 4 sulfur cluster binding"/>
    <property type="evidence" value="ECO:0007669"/>
    <property type="project" value="UniProtKB-KW"/>
</dbReference>
<dbReference type="GO" id="GO:0046872">
    <property type="term" value="F:metal ion binding"/>
    <property type="evidence" value="ECO:0007669"/>
    <property type="project" value="UniProtKB-KW"/>
</dbReference>
<dbReference type="GO" id="GO:0035597">
    <property type="term" value="F:N6-isopentenyladenosine methylthiotransferase activity"/>
    <property type="evidence" value="ECO:0007669"/>
    <property type="project" value="TreeGrafter"/>
</dbReference>
<dbReference type="CDD" id="cd01335">
    <property type="entry name" value="Radical_SAM"/>
    <property type="match status" value="1"/>
</dbReference>
<dbReference type="FunFam" id="3.40.50.12160:FF:000003">
    <property type="entry name" value="CDK5 regulatory subunit-associated protein 1"/>
    <property type="match status" value="1"/>
</dbReference>
<dbReference type="FunFam" id="3.80.30.20:FF:000001">
    <property type="entry name" value="tRNA-2-methylthio-N(6)-dimethylallyladenosine synthase 2"/>
    <property type="match status" value="1"/>
</dbReference>
<dbReference type="Gene3D" id="3.30.750.200">
    <property type="match status" value="1"/>
</dbReference>
<dbReference type="Gene3D" id="3.30.750.210">
    <property type="match status" value="1"/>
</dbReference>
<dbReference type="Gene3D" id="3.40.50.12160">
    <property type="entry name" value="Methylthiotransferase, N-terminal domain"/>
    <property type="match status" value="1"/>
</dbReference>
<dbReference type="InterPro" id="IPR006638">
    <property type="entry name" value="Elp3/MiaA/NifB-like_rSAM"/>
</dbReference>
<dbReference type="InterPro" id="IPR005839">
    <property type="entry name" value="Methylthiotransferase"/>
</dbReference>
<dbReference type="InterPro" id="IPR020612">
    <property type="entry name" value="Methylthiotransferase_CS"/>
</dbReference>
<dbReference type="InterPro" id="IPR013848">
    <property type="entry name" value="Methylthiotransferase_N"/>
</dbReference>
<dbReference type="InterPro" id="IPR038135">
    <property type="entry name" value="Methylthiotransferase_N_sf"/>
</dbReference>
<dbReference type="InterPro" id="IPR007197">
    <property type="entry name" value="rSAM"/>
</dbReference>
<dbReference type="InterPro" id="IPR002792">
    <property type="entry name" value="TRAM_dom"/>
</dbReference>
<dbReference type="NCBIfam" id="TIGR01574">
    <property type="entry name" value="miaB-methiolase"/>
    <property type="match status" value="1"/>
</dbReference>
<dbReference type="NCBIfam" id="TIGR00089">
    <property type="entry name" value="MiaB/RimO family radical SAM methylthiotransferase"/>
    <property type="match status" value="1"/>
</dbReference>
<dbReference type="PANTHER" id="PTHR43020">
    <property type="entry name" value="CDK5 REGULATORY SUBUNIT-ASSOCIATED PROTEIN 1"/>
    <property type="match status" value="1"/>
</dbReference>
<dbReference type="PANTHER" id="PTHR43020:SF2">
    <property type="entry name" value="MITOCHONDRIAL TRNA METHYLTHIOTRANSFERASE CDK5RAP1"/>
    <property type="match status" value="1"/>
</dbReference>
<dbReference type="Pfam" id="PF04055">
    <property type="entry name" value="Radical_SAM"/>
    <property type="match status" value="1"/>
</dbReference>
<dbReference type="Pfam" id="PF01938">
    <property type="entry name" value="TRAM"/>
    <property type="match status" value="1"/>
</dbReference>
<dbReference type="Pfam" id="PF00919">
    <property type="entry name" value="UPF0004"/>
    <property type="match status" value="1"/>
</dbReference>
<dbReference type="SFLD" id="SFLDG01082">
    <property type="entry name" value="B12-binding_domain_containing"/>
    <property type="match status" value="1"/>
</dbReference>
<dbReference type="SFLD" id="SFLDG01061">
    <property type="entry name" value="methylthiotransferase"/>
    <property type="match status" value="1"/>
</dbReference>
<dbReference type="SFLD" id="SFLDS00029">
    <property type="entry name" value="Radical_SAM"/>
    <property type="match status" value="1"/>
</dbReference>
<dbReference type="SMART" id="SM00729">
    <property type="entry name" value="Elp3"/>
    <property type="match status" value="1"/>
</dbReference>
<dbReference type="SUPFAM" id="SSF102114">
    <property type="entry name" value="Radical SAM enzymes"/>
    <property type="match status" value="1"/>
</dbReference>
<dbReference type="PROSITE" id="PS51449">
    <property type="entry name" value="MTTASE_N"/>
    <property type="match status" value="1"/>
</dbReference>
<dbReference type="PROSITE" id="PS01278">
    <property type="entry name" value="MTTASE_RADICAL"/>
    <property type="match status" value="1"/>
</dbReference>
<dbReference type="PROSITE" id="PS51918">
    <property type="entry name" value="RADICAL_SAM"/>
    <property type="match status" value="1"/>
</dbReference>
<dbReference type="PROSITE" id="PS50926">
    <property type="entry name" value="TRAM"/>
    <property type="match status" value="1"/>
</dbReference>
<proteinExistence type="inferred from homology"/>
<gene>
    <name type="primary">miaB</name>
    <name type="ordered locus">BCc_272</name>
</gene>
<name>MIAB_BUCCC</name>
<evidence type="ECO:0000250" key="1"/>
<evidence type="ECO:0000255" key="2">
    <source>
        <dbReference type="PROSITE-ProRule" id="PRU00208"/>
    </source>
</evidence>
<evidence type="ECO:0000255" key="3">
    <source>
        <dbReference type="PROSITE-ProRule" id="PRU00780"/>
    </source>
</evidence>
<evidence type="ECO:0000255" key="4">
    <source>
        <dbReference type="PROSITE-ProRule" id="PRU01266"/>
    </source>
</evidence>
<evidence type="ECO:0000305" key="5"/>
<reference key="1">
    <citation type="journal article" date="2006" name="Science">
        <title>A small microbial genome: the end of a long symbiotic relationship?</title>
        <authorList>
            <person name="Perez-Brocal V."/>
            <person name="Gil R."/>
            <person name="Ramos S."/>
            <person name="Lamelas A."/>
            <person name="Postigo M."/>
            <person name="Michelena J.M."/>
            <person name="Silva F.J."/>
            <person name="Moya A."/>
            <person name="Latorre A."/>
        </authorList>
    </citation>
    <scope>NUCLEOTIDE SEQUENCE [LARGE SCALE GENOMIC DNA]</scope>
    <source>
        <strain>Cc</strain>
    </source>
</reference>
<sequence length="435" mass="50960">MNEHDSSIIENILKKTNLYIITKKPEISDILILNTCSIREKAQEKLFHQLGRWKKLKQKNSKILIAVGGCVAVQEGKKIYKRAKFIDIIFGPQTLHKLPKLLIESNKKKSLIINIKKKSLKKFNYTINKNTNIKKKFSSFVTIMEGCNKYCSFCIVPYTRGKEVSRNNKKIISEIIELSKKGVREITLLGQNVNAYKFSDTFNKKNYSFSDLLYSISEIPRIDRIRFITSHPVEFNNNIIEAYKKIPKLTNFLHLPVQSGSNKILKLMKRGYTIEKYENIVNKIKKIRPKINISSDFIIGFPGETKEDFQKTIYFISKINFDTSYSFIYSKRPRTRASKLEDNVTMEEKKKRLYKVQQKINQQAFQWKRRSTEQIVLVEGISKNNIQELYGRTENNRTVFFEGNPKFIGNFIKLKIISIKYNTFLKGKIISNNYF</sequence>
<accession>Q057G5</accession>
<keyword id="KW-0004">4Fe-4S</keyword>
<keyword id="KW-0963">Cytoplasm</keyword>
<keyword id="KW-0408">Iron</keyword>
<keyword id="KW-0411">Iron-sulfur</keyword>
<keyword id="KW-0479">Metal-binding</keyword>
<keyword id="KW-1185">Reference proteome</keyword>
<keyword id="KW-0949">S-adenosyl-L-methionine</keyword>
<keyword id="KW-0808">Transferase</keyword>
<keyword id="KW-0819">tRNA processing</keyword>
<feature type="chain" id="PRO_0000374171" description="tRNA-2-methylthio-N(6)-dimethylallyladenosine synthase">
    <location>
        <begin position="1"/>
        <end position="435"/>
    </location>
</feature>
<feature type="domain" description="MTTase N-terminal" evidence="3">
    <location>
        <begin position="1"/>
        <end position="107"/>
    </location>
</feature>
<feature type="domain" description="Radical SAM core" evidence="4">
    <location>
        <begin position="133"/>
        <end position="366"/>
    </location>
</feature>
<feature type="domain" description="TRAM" evidence="2">
    <location>
        <begin position="367"/>
        <end position="431"/>
    </location>
</feature>
<feature type="binding site" evidence="3">
    <location>
        <position position="147"/>
    </location>
    <ligand>
        <name>[4Fe-4S] cluster</name>
        <dbReference type="ChEBI" id="CHEBI:49883"/>
        <note>4Fe-4S-S-AdoMet</note>
    </ligand>
</feature>
<feature type="binding site" evidence="3">
    <location>
        <position position="151"/>
    </location>
    <ligand>
        <name>[4Fe-4S] cluster</name>
        <dbReference type="ChEBI" id="CHEBI:49883"/>
        <note>4Fe-4S-S-AdoMet</note>
    </ligand>
</feature>
<feature type="binding site" evidence="3">
    <location>
        <position position="154"/>
    </location>
    <ligand>
        <name>[4Fe-4S] cluster</name>
        <dbReference type="ChEBI" id="CHEBI:49883"/>
        <note>4Fe-4S-S-AdoMet</note>
    </ligand>
</feature>
<organism>
    <name type="scientific">Buchnera aphidicola subsp. Cinara cedri (strain Cc)</name>
    <dbReference type="NCBI Taxonomy" id="372461"/>
    <lineage>
        <taxon>Bacteria</taxon>
        <taxon>Pseudomonadati</taxon>
        <taxon>Pseudomonadota</taxon>
        <taxon>Gammaproteobacteria</taxon>
        <taxon>Enterobacterales</taxon>
        <taxon>Erwiniaceae</taxon>
        <taxon>Buchnera</taxon>
    </lineage>
</organism>
<comment type="function">
    <text evidence="1">Catalyzes the methylthiolation of N6-(dimethylallyl)adenosine (i(6)A), leading to the formation of 2-methylthio-N6-(dimethylallyl)adenosine (ms(2)i(6)A) at position 37 in tRNAs that read codons beginning with uridine.</text>
</comment>
<comment type="catalytic activity">
    <reaction>
        <text>N(6)-dimethylallyladenosine(37) in tRNA + (sulfur carrier)-SH + AH2 + 2 S-adenosyl-L-methionine = 2-methylsulfanyl-N(6)-dimethylallyladenosine(37) in tRNA + (sulfur carrier)-H + 5'-deoxyadenosine + L-methionine + A + S-adenosyl-L-homocysteine + 2 H(+)</text>
        <dbReference type="Rhea" id="RHEA:37067"/>
        <dbReference type="Rhea" id="RHEA-COMP:10375"/>
        <dbReference type="Rhea" id="RHEA-COMP:10376"/>
        <dbReference type="Rhea" id="RHEA-COMP:14737"/>
        <dbReference type="Rhea" id="RHEA-COMP:14739"/>
        <dbReference type="ChEBI" id="CHEBI:13193"/>
        <dbReference type="ChEBI" id="CHEBI:15378"/>
        <dbReference type="ChEBI" id="CHEBI:17319"/>
        <dbReference type="ChEBI" id="CHEBI:17499"/>
        <dbReference type="ChEBI" id="CHEBI:29917"/>
        <dbReference type="ChEBI" id="CHEBI:57844"/>
        <dbReference type="ChEBI" id="CHEBI:57856"/>
        <dbReference type="ChEBI" id="CHEBI:59789"/>
        <dbReference type="ChEBI" id="CHEBI:64428"/>
        <dbReference type="ChEBI" id="CHEBI:74415"/>
        <dbReference type="ChEBI" id="CHEBI:74417"/>
        <dbReference type="EC" id="2.8.4.3"/>
    </reaction>
</comment>
<comment type="cofactor">
    <cofactor evidence="1">
        <name>[4Fe-4S] cluster</name>
        <dbReference type="ChEBI" id="CHEBI:49883"/>
    </cofactor>
    <text evidence="1">Binds 1 [4Fe-4S] cluster, which is coordinated with 3 cysteines and an exchangeable S-adenosyl-L-methionine.</text>
</comment>
<comment type="subunit">
    <text evidence="1">Monomer.</text>
</comment>
<comment type="subcellular location">
    <subcellularLocation>
        <location evidence="3">Cytoplasm</location>
    </subcellularLocation>
</comment>
<comment type="similarity">
    <text evidence="5">Belongs to the methylthiotransferase family. MiaB subfamily.</text>
</comment>
<protein>
    <recommendedName>
        <fullName>tRNA-2-methylthio-N(6)-dimethylallyladenosine synthase</fullName>
        <ecNumber>2.8.4.3</ecNumber>
    </recommendedName>
    <alternativeName>
        <fullName>(Dimethylallyl)adenosine tRNA methylthiotransferase MiaB</fullName>
    </alternativeName>
    <alternativeName>
        <fullName>tRNA-i(6)A37 methylthiotransferase</fullName>
    </alternativeName>
</protein>